<keyword id="KW-0025">Alternative splicing</keyword>
<keyword id="KW-1003">Cell membrane</keyword>
<keyword id="KW-0472">Membrane</keyword>
<keyword id="KW-0524">Neurogenesis</keyword>
<keyword id="KW-0539">Nucleus</keyword>
<keyword id="KW-1267">Proteomics identification</keyword>
<keyword id="KW-1185">Reference proteome</keyword>
<protein>
    <recommendedName>
        <fullName evidence="1">Vexin</fullName>
    </recommendedName>
</protein>
<comment type="function">
    <text evidence="1">Required for neurogenesis in the neural plate and retina. Strongly cooperates with neural bHLH factors to promote neurogenesis.</text>
</comment>
<comment type="interaction">
    <interactant intactId="EBI-12071548">
        <id>Q8TAG6</id>
    </interactant>
    <interactant intactId="EBI-12011224">
        <id>Q9NPB3</id>
        <label>CABP2</label>
    </interactant>
    <organismsDiffer>false</organismsDiffer>
    <experiments>3</experiments>
</comment>
<comment type="interaction">
    <interactant intactId="EBI-12071548">
        <id>Q8TAG6</id>
    </interactant>
    <interactant intactId="EBI-739624">
        <id>Q8NHQ1</id>
        <label>CEP70</label>
    </interactant>
    <organismsDiffer>false</organismsDiffer>
    <experiments>3</experiments>
</comment>
<comment type="interaction">
    <interactant intactId="EBI-12071548">
        <id>Q8TAG6</id>
    </interactant>
    <interactant intactId="EBI-701903">
        <id>Q14192</id>
        <label>FHL2</label>
    </interactant>
    <organismsDiffer>false</organismsDiffer>
    <experiments>3</experiments>
</comment>
<comment type="interaction">
    <interactant intactId="EBI-12071548">
        <id>Q8TAG6</id>
    </interactant>
    <interactant intactId="EBI-741158">
        <id>Q96HA8</id>
        <label>NTAQ1</label>
    </interactant>
    <organismsDiffer>false</organismsDiffer>
    <experiments>3</experiments>
</comment>
<comment type="interaction">
    <interactant intactId="EBI-12071548">
        <id>Q8TAG6</id>
    </interactant>
    <interactant intactId="EBI-7254550">
        <id>P36508</id>
        <label>ZNF76</label>
    </interactant>
    <organismsDiffer>false</organismsDiffer>
    <experiments>3</experiments>
</comment>
<comment type="subcellular location">
    <subcellularLocation>
        <location evidence="1">Cell membrane</location>
    </subcellularLocation>
    <subcellularLocation>
        <location evidence="1">Nucleus</location>
    </subcellularLocation>
    <text evidence="1">Nuclear localization is essential for its function in neurogenesis.</text>
</comment>
<comment type="alternative products">
    <event type="alternative splicing"/>
    <isoform>
        <id>Q8TAG6-1</id>
        <name>1</name>
        <sequence type="displayed"/>
    </isoform>
    <isoform>
        <id>Q8TAG6-2</id>
        <name>2</name>
        <sequence type="described" ref="VSP_038986"/>
    </isoform>
</comment>
<comment type="similarity">
    <text evidence="4">Belongs to the vexin family.</text>
</comment>
<comment type="caution">
    <text evidence="4">It is uncertain whether Met-1 or Met-2 is the initiator.</text>
</comment>
<comment type="sequence caution" evidence="4">
    <conflict type="erroneous initiation">
        <sequence resource="EMBL-CDS" id="AAH28400"/>
    </conflict>
    <text>Truncated N-terminus.</text>
</comment>
<comment type="sequence caution" evidence="4">
    <conflict type="erroneous initiation">
        <sequence resource="EMBL-CDS" id="BAG37870"/>
    </conflict>
    <text>Truncated N-terminus.</text>
</comment>
<sequence length="207" mass="22584">MMHQIYSCSDENIEVFTTVIPSKVSSPARRRAKSSQHLLTKNVVIESDLYTHQPLELLPHRGDRRDPGDRRRFGRLQTARPPTAHPAKASARPVGISEPKTSNLCGNRAYGKSLIPPVPRISVKTSASASLEATAMGTEKGAVLMRGSRHLKKMTEEYPALPQGAEASLPLTGSASCGVPGILRKMWTRHKKKSEYVGATNSAFEAD</sequence>
<evidence type="ECO:0000250" key="1">
    <source>
        <dbReference type="UniProtKB" id="Q8BG31"/>
    </source>
</evidence>
<evidence type="ECO:0000256" key="2">
    <source>
        <dbReference type="SAM" id="MobiDB-lite"/>
    </source>
</evidence>
<evidence type="ECO:0000303" key="3">
    <source>
    </source>
</evidence>
<evidence type="ECO:0000305" key="4"/>
<evidence type="ECO:0000312" key="5">
    <source>
        <dbReference type="HGNC" id="HGNC:28498"/>
    </source>
</evidence>
<dbReference type="EMBL" id="AK294261">
    <property type="protein sequence ID" value="BAG57555.1"/>
    <property type="molecule type" value="mRNA"/>
</dbReference>
<dbReference type="EMBL" id="AK315486">
    <property type="protein sequence ID" value="BAG37870.1"/>
    <property type="status" value="ALT_INIT"/>
    <property type="molecule type" value="mRNA"/>
</dbReference>
<dbReference type="EMBL" id="AC009879">
    <property type="status" value="NOT_ANNOTATED_CDS"/>
    <property type="molecule type" value="Genomic_DNA"/>
</dbReference>
<dbReference type="EMBL" id="BC028400">
    <property type="protein sequence ID" value="AAH28400.1"/>
    <property type="status" value="ALT_INIT"/>
    <property type="molecule type" value="mRNA"/>
</dbReference>
<dbReference type="CCDS" id="CCDS6191.2">
    <molecule id="Q8TAG6-1"/>
</dbReference>
<dbReference type="RefSeq" id="NP_689978.2">
    <molecule id="Q8TAG6-1"/>
    <property type="nucleotide sequence ID" value="NM_152765.4"/>
</dbReference>
<dbReference type="BioGRID" id="129048">
    <property type="interactions" value="16"/>
</dbReference>
<dbReference type="FunCoup" id="Q8TAG6">
    <property type="interactions" value="423"/>
</dbReference>
<dbReference type="IntAct" id="Q8TAG6">
    <property type="interactions" value="6"/>
</dbReference>
<dbReference type="STRING" id="9606.ENSP00000302260"/>
<dbReference type="iPTMnet" id="Q8TAG6"/>
<dbReference type="PhosphoSitePlus" id="Q8TAG6"/>
<dbReference type="BioMuta" id="C8orf46"/>
<dbReference type="MassIVE" id="Q8TAG6"/>
<dbReference type="PaxDb" id="9606-ENSP00000302260"/>
<dbReference type="PeptideAtlas" id="Q8TAG6"/>
<dbReference type="ProteomicsDB" id="73881">
    <molecule id="Q8TAG6-1"/>
</dbReference>
<dbReference type="ProteomicsDB" id="73882">
    <molecule id="Q8TAG6-2"/>
</dbReference>
<dbReference type="Antibodypedia" id="65917">
    <property type="antibodies" value="13 antibodies from 8 providers"/>
</dbReference>
<dbReference type="DNASU" id="254778"/>
<dbReference type="Ensembl" id="ENST00000305454.8">
    <molecule id="Q8TAG6-1"/>
    <property type="protein sequence ID" value="ENSP00000302260.3"/>
    <property type="gene ID" value="ENSG00000169085.14"/>
</dbReference>
<dbReference type="Ensembl" id="ENST00000522977.5">
    <molecule id="Q8TAG6-2"/>
    <property type="protein sequence ID" value="ENSP00000430141.1"/>
    <property type="gene ID" value="ENSG00000169085.14"/>
</dbReference>
<dbReference type="Ensembl" id="ENST00000699189.1">
    <molecule id="Q8TAG6-1"/>
    <property type="protein sequence ID" value="ENSP00000514189.1"/>
    <property type="gene ID" value="ENSG00000169085.14"/>
</dbReference>
<dbReference type="GeneID" id="254778"/>
<dbReference type="KEGG" id="hsa:254778"/>
<dbReference type="MANE-Select" id="ENST00000305454.8">
    <property type="protein sequence ID" value="ENSP00000302260.3"/>
    <property type="RefSeq nucleotide sequence ID" value="NM_152765.4"/>
    <property type="RefSeq protein sequence ID" value="NP_689978.2"/>
</dbReference>
<dbReference type="UCSC" id="uc003xwg.4">
    <molecule id="Q8TAG6-1"/>
    <property type="organism name" value="human"/>
</dbReference>
<dbReference type="AGR" id="HGNC:28498"/>
<dbReference type="CTD" id="254778"/>
<dbReference type="DisGeNET" id="254778"/>
<dbReference type="GeneCards" id="VXN"/>
<dbReference type="HGNC" id="HGNC:28498">
    <property type="gene designation" value="VXN"/>
</dbReference>
<dbReference type="HPA" id="ENSG00000169085">
    <property type="expression patterns" value="Tissue enriched (brain)"/>
</dbReference>
<dbReference type="neXtProt" id="NX_Q8TAG6"/>
<dbReference type="OpenTargets" id="ENSG00000169085"/>
<dbReference type="PharmGKB" id="PA142672365"/>
<dbReference type="VEuPathDB" id="HostDB:ENSG00000169085"/>
<dbReference type="eggNOG" id="ENOG502S3CJ">
    <property type="taxonomic scope" value="Eukaryota"/>
</dbReference>
<dbReference type="GeneTree" id="ENSGT00390000010499"/>
<dbReference type="HOGENOM" id="CLU_116780_0_0_1"/>
<dbReference type="InParanoid" id="Q8TAG6"/>
<dbReference type="OMA" id="DRWDTGD"/>
<dbReference type="OrthoDB" id="5340910at2759"/>
<dbReference type="PAN-GO" id="Q8TAG6">
    <property type="GO annotations" value="1 GO annotation based on evolutionary models"/>
</dbReference>
<dbReference type="PhylomeDB" id="Q8TAG6"/>
<dbReference type="TreeFam" id="TF336189"/>
<dbReference type="PathwayCommons" id="Q8TAG6"/>
<dbReference type="SignaLink" id="Q8TAG6"/>
<dbReference type="BioGRID-ORCS" id="254778">
    <property type="hits" value="23 hits in 1125 CRISPR screens"/>
</dbReference>
<dbReference type="ChiTaRS" id="C8orf46">
    <property type="organism name" value="human"/>
</dbReference>
<dbReference type="GenomeRNAi" id="254778"/>
<dbReference type="Pharos" id="Q8TAG6">
    <property type="development level" value="Tdark"/>
</dbReference>
<dbReference type="PRO" id="PR:Q8TAG6"/>
<dbReference type="Proteomes" id="UP000005640">
    <property type="component" value="Chromosome 8"/>
</dbReference>
<dbReference type="RNAct" id="Q8TAG6">
    <property type="molecule type" value="protein"/>
</dbReference>
<dbReference type="Bgee" id="ENSG00000169085">
    <property type="expression patterns" value="Expressed in C1 segment of cervical spinal cord and 101 other cell types or tissues"/>
</dbReference>
<dbReference type="ExpressionAtlas" id="Q8TAG6">
    <property type="expression patterns" value="baseline and differential"/>
</dbReference>
<dbReference type="GO" id="GO:0005634">
    <property type="term" value="C:nucleus"/>
    <property type="evidence" value="ECO:0000250"/>
    <property type="project" value="UniProtKB"/>
</dbReference>
<dbReference type="GO" id="GO:0005886">
    <property type="term" value="C:plasma membrane"/>
    <property type="evidence" value="ECO:0000250"/>
    <property type="project" value="UniProtKB"/>
</dbReference>
<dbReference type="GO" id="GO:0022008">
    <property type="term" value="P:neurogenesis"/>
    <property type="evidence" value="ECO:0000250"/>
    <property type="project" value="UniProtKB"/>
</dbReference>
<dbReference type="GO" id="GO:0030182">
    <property type="term" value="P:neuron differentiation"/>
    <property type="evidence" value="ECO:0000250"/>
    <property type="project" value="UniProtKB"/>
</dbReference>
<dbReference type="InterPro" id="IPR040470">
    <property type="entry name" value="Vexin"/>
</dbReference>
<dbReference type="InterPro" id="IPR027900">
    <property type="entry name" value="Vexin_dom"/>
</dbReference>
<dbReference type="PANTHER" id="PTHR31520">
    <property type="entry name" value="VEXIN"/>
    <property type="match status" value="1"/>
</dbReference>
<dbReference type="PANTHER" id="PTHR31520:SF1">
    <property type="entry name" value="VEXIN"/>
    <property type="match status" value="1"/>
</dbReference>
<dbReference type="Pfam" id="PF15505">
    <property type="entry name" value="Vexin"/>
    <property type="match status" value="1"/>
</dbReference>
<proteinExistence type="evidence at protein level"/>
<gene>
    <name evidence="5" type="primary">VXN</name>
    <name evidence="5" type="synonym">C8orf46</name>
</gene>
<accession>Q8TAG6</accession>
<accession>B2RDC3</accession>
<accession>B4DFU4</accession>
<accession>C9J814</accession>
<accession>C9JCS3</accession>
<name>VEXIN_HUMAN</name>
<organism>
    <name type="scientific">Homo sapiens</name>
    <name type="common">Human</name>
    <dbReference type="NCBI Taxonomy" id="9606"/>
    <lineage>
        <taxon>Eukaryota</taxon>
        <taxon>Metazoa</taxon>
        <taxon>Chordata</taxon>
        <taxon>Craniata</taxon>
        <taxon>Vertebrata</taxon>
        <taxon>Euteleostomi</taxon>
        <taxon>Mammalia</taxon>
        <taxon>Eutheria</taxon>
        <taxon>Euarchontoglires</taxon>
        <taxon>Primates</taxon>
        <taxon>Haplorrhini</taxon>
        <taxon>Catarrhini</taxon>
        <taxon>Hominidae</taxon>
        <taxon>Homo</taxon>
    </lineage>
</organism>
<reference key="1">
    <citation type="journal article" date="2004" name="Nat. Genet.">
        <title>Complete sequencing and characterization of 21,243 full-length human cDNAs.</title>
        <authorList>
            <person name="Ota T."/>
            <person name="Suzuki Y."/>
            <person name="Nishikawa T."/>
            <person name="Otsuki T."/>
            <person name="Sugiyama T."/>
            <person name="Irie R."/>
            <person name="Wakamatsu A."/>
            <person name="Hayashi K."/>
            <person name="Sato H."/>
            <person name="Nagai K."/>
            <person name="Kimura K."/>
            <person name="Makita H."/>
            <person name="Sekine M."/>
            <person name="Obayashi M."/>
            <person name="Nishi T."/>
            <person name="Shibahara T."/>
            <person name="Tanaka T."/>
            <person name="Ishii S."/>
            <person name="Yamamoto J."/>
            <person name="Saito K."/>
            <person name="Kawai Y."/>
            <person name="Isono Y."/>
            <person name="Nakamura Y."/>
            <person name="Nagahari K."/>
            <person name="Murakami K."/>
            <person name="Yasuda T."/>
            <person name="Iwayanagi T."/>
            <person name="Wagatsuma M."/>
            <person name="Shiratori A."/>
            <person name="Sudo H."/>
            <person name="Hosoiri T."/>
            <person name="Kaku Y."/>
            <person name="Kodaira H."/>
            <person name="Kondo H."/>
            <person name="Sugawara M."/>
            <person name="Takahashi M."/>
            <person name="Kanda K."/>
            <person name="Yokoi T."/>
            <person name="Furuya T."/>
            <person name="Kikkawa E."/>
            <person name="Omura Y."/>
            <person name="Abe K."/>
            <person name="Kamihara K."/>
            <person name="Katsuta N."/>
            <person name="Sato K."/>
            <person name="Tanikawa M."/>
            <person name="Yamazaki M."/>
            <person name="Ninomiya K."/>
            <person name="Ishibashi T."/>
            <person name="Yamashita H."/>
            <person name="Murakawa K."/>
            <person name="Fujimori K."/>
            <person name="Tanai H."/>
            <person name="Kimata M."/>
            <person name="Watanabe M."/>
            <person name="Hiraoka S."/>
            <person name="Chiba Y."/>
            <person name="Ishida S."/>
            <person name="Ono Y."/>
            <person name="Takiguchi S."/>
            <person name="Watanabe S."/>
            <person name="Yosida M."/>
            <person name="Hotuta T."/>
            <person name="Kusano J."/>
            <person name="Kanehori K."/>
            <person name="Takahashi-Fujii A."/>
            <person name="Hara H."/>
            <person name="Tanase T.-O."/>
            <person name="Nomura Y."/>
            <person name="Togiya S."/>
            <person name="Komai F."/>
            <person name="Hara R."/>
            <person name="Takeuchi K."/>
            <person name="Arita M."/>
            <person name="Imose N."/>
            <person name="Musashino K."/>
            <person name="Yuuki H."/>
            <person name="Oshima A."/>
            <person name="Sasaki N."/>
            <person name="Aotsuka S."/>
            <person name="Yoshikawa Y."/>
            <person name="Matsunawa H."/>
            <person name="Ichihara T."/>
            <person name="Shiohata N."/>
            <person name="Sano S."/>
            <person name="Moriya S."/>
            <person name="Momiyama H."/>
            <person name="Satoh N."/>
            <person name="Takami S."/>
            <person name="Terashima Y."/>
            <person name="Suzuki O."/>
            <person name="Nakagawa S."/>
            <person name="Senoh A."/>
            <person name="Mizoguchi H."/>
            <person name="Goto Y."/>
            <person name="Shimizu F."/>
            <person name="Wakebe H."/>
            <person name="Hishigaki H."/>
            <person name="Watanabe T."/>
            <person name="Sugiyama A."/>
            <person name="Takemoto M."/>
            <person name="Kawakami B."/>
            <person name="Yamazaki M."/>
            <person name="Watanabe K."/>
            <person name="Kumagai A."/>
            <person name="Itakura S."/>
            <person name="Fukuzumi Y."/>
            <person name="Fujimori Y."/>
            <person name="Komiyama M."/>
            <person name="Tashiro H."/>
            <person name="Tanigami A."/>
            <person name="Fujiwara T."/>
            <person name="Ono T."/>
            <person name="Yamada K."/>
            <person name="Fujii Y."/>
            <person name="Ozaki K."/>
            <person name="Hirao M."/>
            <person name="Ohmori Y."/>
            <person name="Kawabata A."/>
            <person name="Hikiji T."/>
            <person name="Kobatake N."/>
            <person name="Inagaki H."/>
            <person name="Ikema Y."/>
            <person name="Okamoto S."/>
            <person name="Okitani R."/>
            <person name="Kawakami T."/>
            <person name="Noguchi S."/>
            <person name="Itoh T."/>
            <person name="Shigeta K."/>
            <person name="Senba T."/>
            <person name="Matsumura K."/>
            <person name="Nakajima Y."/>
            <person name="Mizuno T."/>
            <person name="Morinaga M."/>
            <person name="Sasaki M."/>
            <person name="Togashi T."/>
            <person name="Oyama M."/>
            <person name="Hata H."/>
            <person name="Watanabe M."/>
            <person name="Komatsu T."/>
            <person name="Mizushima-Sugano J."/>
            <person name="Satoh T."/>
            <person name="Shirai Y."/>
            <person name="Takahashi Y."/>
            <person name="Nakagawa K."/>
            <person name="Okumura K."/>
            <person name="Nagase T."/>
            <person name="Nomura N."/>
            <person name="Kikuchi H."/>
            <person name="Masuho Y."/>
            <person name="Yamashita R."/>
            <person name="Nakai K."/>
            <person name="Yada T."/>
            <person name="Nakamura Y."/>
            <person name="Ohara O."/>
            <person name="Isogai T."/>
            <person name="Sugano S."/>
        </authorList>
    </citation>
    <scope>NUCLEOTIDE SEQUENCE [LARGE SCALE MRNA] (ISOFORMS 1 AND 2)</scope>
    <source>
        <tissue>Amygdala</tissue>
        <tissue>Teratocarcinoma</tissue>
    </source>
</reference>
<reference key="2">
    <citation type="journal article" date="2006" name="Nature">
        <title>DNA sequence and analysis of human chromosome 8.</title>
        <authorList>
            <person name="Nusbaum C."/>
            <person name="Mikkelsen T.S."/>
            <person name="Zody M.C."/>
            <person name="Asakawa S."/>
            <person name="Taudien S."/>
            <person name="Garber M."/>
            <person name="Kodira C.D."/>
            <person name="Schueler M.G."/>
            <person name="Shimizu A."/>
            <person name="Whittaker C.A."/>
            <person name="Chang J.L."/>
            <person name="Cuomo C.A."/>
            <person name="Dewar K."/>
            <person name="FitzGerald M.G."/>
            <person name="Yang X."/>
            <person name="Allen N.R."/>
            <person name="Anderson S."/>
            <person name="Asakawa T."/>
            <person name="Blechschmidt K."/>
            <person name="Bloom T."/>
            <person name="Borowsky M.L."/>
            <person name="Butler J."/>
            <person name="Cook A."/>
            <person name="Corum B."/>
            <person name="DeArellano K."/>
            <person name="DeCaprio D."/>
            <person name="Dooley K.T."/>
            <person name="Dorris L. III"/>
            <person name="Engels R."/>
            <person name="Gloeckner G."/>
            <person name="Hafez N."/>
            <person name="Hagopian D.S."/>
            <person name="Hall J.L."/>
            <person name="Ishikawa S.K."/>
            <person name="Jaffe D.B."/>
            <person name="Kamat A."/>
            <person name="Kudoh J."/>
            <person name="Lehmann R."/>
            <person name="Lokitsang T."/>
            <person name="Macdonald P."/>
            <person name="Major J.E."/>
            <person name="Matthews C.D."/>
            <person name="Mauceli E."/>
            <person name="Menzel U."/>
            <person name="Mihalev A.H."/>
            <person name="Minoshima S."/>
            <person name="Murayama Y."/>
            <person name="Naylor J.W."/>
            <person name="Nicol R."/>
            <person name="Nguyen C."/>
            <person name="O'Leary S.B."/>
            <person name="O'Neill K."/>
            <person name="Parker S.C.J."/>
            <person name="Polley A."/>
            <person name="Raymond C.K."/>
            <person name="Reichwald K."/>
            <person name="Rodriguez J."/>
            <person name="Sasaki T."/>
            <person name="Schilhabel M."/>
            <person name="Siddiqui R."/>
            <person name="Smith C.L."/>
            <person name="Sneddon T.P."/>
            <person name="Talamas J.A."/>
            <person name="Tenzin P."/>
            <person name="Topham K."/>
            <person name="Venkataraman V."/>
            <person name="Wen G."/>
            <person name="Yamazaki S."/>
            <person name="Young S.K."/>
            <person name="Zeng Q."/>
            <person name="Zimmer A.R."/>
            <person name="Rosenthal A."/>
            <person name="Birren B.W."/>
            <person name="Platzer M."/>
            <person name="Shimizu N."/>
            <person name="Lander E.S."/>
        </authorList>
    </citation>
    <scope>NUCLEOTIDE SEQUENCE [LARGE SCALE GENOMIC DNA]</scope>
</reference>
<reference key="3">
    <citation type="journal article" date="2004" name="Genome Res.">
        <title>The status, quality, and expansion of the NIH full-length cDNA project: the Mammalian Gene Collection (MGC).</title>
        <authorList>
            <consortium name="The MGC Project Team"/>
        </authorList>
    </citation>
    <scope>NUCLEOTIDE SEQUENCE [LARGE SCALE MRNA] (ISOFORM 1)</scope>
    <source>
        <tissue>Brain</tissue>
    </source>
</reference>
<feature type="chain" id="PRO_0000271014" description="Vexin">
    <location>
        <begin position="1"/>
        <end position="207"/>
    </location>
</feature>
<feature type="region of interest" description="Disordered" evidence="2">
    <location>
        <begin position="56"/>
        <end position="100"/>
    </location>
</feature>
<feature type="compositionally biased region" description="Basic and acidic residues" evidence="2">
    <location>
        <begin position="58"/>
        <end position="71"/>
    </location>
</feature>
<feature type="splice variant" id="VSP_038986" description="In isoform 2." evidence="3">
    <original>VGISEPKTSNLCGNRAYGKSLIPPVPRISVKTSASASLEATAMGTEKGAVLMRGSRHLKKMTEEYPALPQGAEASLPLTGSASCGVPGILRKMWTRHKKKSEYVGATNSAFEAD</original>
    <variation>DTASAPDLSENFSLCLIGGDSHGHREGSCSDERIQTSQEDD</variation>
    <location>
        <begin position="94"/>
        <end position="207"/>
    </location>
</feature>